<evidence type="ECO:0000255" key="1">
    <source>
        <dbReference type="HAMAP-Rule" id="MF_00165"/>
    </source>
</evidence>
<keyword id="KW-0067">ATP-binding</keyword>
<keyword id="KW-0418">Kinase</keyword>
<keyword id="KW-0545">Nucleotide biosynthesis</keyword>
<keyword id="KW-0547">Nucleotide-binding</keyword>
<keyword id="KW-0808">Transferase</keyword>
<feature type="chain" id="PRO_1000203617" description="Thymidylate kinase">
    <location>
        <begin position="1"/>
        <end position="225"/>
    </location>
</feature>
<feature type="binding site" evidence="1">
    <location>
        <begin position="9"/>
        <end position="16"/>
    </location>
    <ligand>
        <name>ATP</name>
        <dbReference type="ChEBI" id="CHEBI:30616"/>
    </ligand>
</feature>
<dbReference type="EC" id="2.7.4.9" evidence="1"/>
<dbReference type="EMBL" id="CP001661">
    <property type="protein sequence ID" value="ACT17120.1"/>
    <property type="molecule type" value="Genomic_DNA"/>
</dbReference>
<dbReference type="SMR" id="C6E2H4"/>
<dbReference type="STRING" id="443144.GM21_1059"/>
<dbReference type="KEGG" id="gem:GM21_1059"/>
<dbReference type="eggNOG" id="COG0125">
    <property type="taxonomic scope" value="Bacteria"/>
</dbReference>
<dbReference type="HOGENOM" id="CLU_049131_0_2_7"/>
<dbReference type="OrthoDB" id="9774907at2"/>
<dbReference type="GO" id="GO:0005829">
    <property type="term" value="C:cytosol"/>
    <property type="evidence" value="ECO:0007669"/>
    <property type="project" value="TreeGrafter"/>
</dbReference>
<dbReference type="GO" id="GO:0005524">
    <property type="term" value="F:ATP binding"/>
    <property type="evidence" value="ECO:0007669"/>
    <property type="project" value="UniProtKB-UniRule"/>
</dbReference>
<dbReference type="GO" id="GO:0004798">
    <property type="term" value="F:dTMP kinase activity"/>
    <property type="evidence" value="ECO:0007669"/>
    <property type="project" value="UniProtKB-UniRule"/>
</dbReference>
<dbReference type="GO" id="GO:0006233">
    <property type="term" value="P:dTDP biosynthetic process"/>
    <property type="evidence" value="ECO:0007669"/>
    <property type="project" value="InterPro"/>
</dbReference>
<dbReference type="GO" id="GO:0006235">
    <property type="term" value="P:dTTP biosynthetic process"/>
    <property type="evidence" value="ECO:0007669"/>
    <property type="project" value="UniProtKB-UniRule"/>
</dbReference>
<dbReference type="GO" id="GO:0006227">
    <property type="term" value="P:dUDP biosynthetic process"/>
    <property type="evidence" value="ECO:0007669"/>
    <property type="project" value="TreeGrafter"/>
</dbReference>
<dbReference type="CDD" id="cd01672">
    <property type="entry name" value="TMPK"/>
    <property type="match status" value="1"/>
</dbReference>
<dbReference type="FunFam" id="3.40.50.300:FF:000225">
    <property type="entry name" value="Thymidylate kinase"/>
    <property type="match status" value="1"/>
</dbReference>
<dbReference type="Gene3D" id="3.40.50.300">
    <property type="entry name" value="P-loop containing nucleotide triphosphate hydrolases"/>
    <property type="match status" value="1"/>
</dbReference>
<dbReference type="HAMAP" id="MF_00165">
    <property type="entry name" value="Thymidylate_kinase"/>
    <property type="match status" value="1"/>
</dbReference>
<dbReference type="InterPro" id="IPR027417">
    <property type="entry name" value="P-loop_NTPase"/>
</dbReference>
<dbReference type="InterPro" id="IPR039430">
    <property type="entry name" value="Thymidylate_kin-like_dom"/>
</dbReference>
<dbReference type="InterPro" id="IPR018094">
    <property type="entry name" value="Thymidylate_kinase"/>
</dbReference>
<dbReference type="NCBIfam" id="TIGR00041">
    <property type="entry name" value="DTMP_kinase"/>
    <property type="match status" value="1"/>
</dbReference>
<dbReference type="PANTHER" id="PTHR10344">
    <property type="entry name" value="THYMIDYLATE KINASE"/>
    <property type="match status" value="1"/>
</dbReference>
<dbReference type="PANTHER" id="PTHR10344:SF4">
    <property type="entry name" value="UMP-CMP KINASE 2, MITOCHONDRIAL"/>
    <property type="match status" value="1"/>
</dbReference>
<dbReference type="Pfam" id="PF02223">
    <property type="entry name" value="Thymidylate_kin"/>
    <property type="match status" value="1"/>
</dbReference>
<dbReference type="SUPFAM" id="SSF52540">
    <property type="entry name" value="P-loop containing nucleoside triphosphate hydrolases"/>
    <property type="match status" value="1"/>
</dbReference>
<name>KTHY_GEOSM</name>
<accession>C6E2H4</accession>
<proteinExistence type="inferred from homology"/>
<reference key="1">
    <citation type="submission" date="2009-07" db="EMBL/GenBank/DDBJ databases">
        <title>Complete sequence of Geobacter sp. M21.</title>
        <authorList>
            <consortium name="US DOE Joint Genome Institute"/>
            <person name="Lucas S."/>
            <person name="Copeland A."/>
            <person name="Lapidus A."/>
            <person name="Glavina del Rio T."/>
            <person name="Dalin E."/>
            <person name="Tice H."/>
            <person name="Bruce D."/>
            <person name="Goodwin L."/>
            <person name="Pitluck S."/>
            <person name="Saunders E."/>
            <person name="Brettin T."/>
            <person name="Detter J.C."/>
            <person name="Han C."/>
            <person name="Larimer F."/>
            <person name="Land M."/>
            <person name="Hauser L."/>
            <person name="Kyrpides N."/>
            <person name="Ovchinnikova G."/>
            <person name="Lovley D."/>
        </authorList>
    </citation>
    <scope>NUCLEOTIDE SEQUENCE [LARGE SCALE GENOMIC DNA]</scope>
    <source>
        <strain>M21</strain>
    </source>
</reference>
<sequence>MGFFITFEGIEGCGKTTQLRLLKERLVALGEKVTVTREPGGCPVADQMRAILLDAKNSAITPLAELLLYAAARAQHVQEVIVPALERGETVLCDRFTDATVAYQGHGRGLDLSVIEELNTLATGRVQPALTVLIDCPVEVGLSRALARIEATSGAKEERFERESLLFHQKVRDGYLALAAAFPERFVVVDGSGDVQQTGLLVEEALRRRMQSLGKAGLTEVKAGC</sequence>
<protein>
    <recommendedName>
        <fullName evidence="1">Thymidylate kinase</fullName>
        <ecNumber evidence="1">2.7.4.9</ecNumber>
    </recommendedName>
    <alternativeName>
        <fullName evidence="1">dTMP kinase</fullName>
    </alternativeName>
</protein>
<comment type="function">
    <text evidence="1">Phosphorylation of dTMP to form dTDP in both de novo and salvage pathways of dTTP synthesis.</text>
</comment>
<comment type="catalytic activity">
    <reaction evidence="1">
        <text>dTMP + ATP = dTDP + ADP</text>
        <dbReference type="Rhea" id="RHEA:13517"/>
        <dbReference type="ChEBI" id="CHEBI:30616"/>
        <dbReference type="ChEBI" id="CHEBI:58369"/>
        <dbReference type="ChEBI" id="CHEBI:63528"/>
        <dbReference type="ChEBI" id="CHEBI:456216"/>
        <dbReference type="EC" id="2.7.4.9"/>
    </reaction>
</comment>
<comment type="similarity">
    <text evidence="1">Belongs to the thymidylate kinase family.</text>
</comment>
<organism>
    <name type="scientific">Geobacter sp. (strain M21)</name>
    <dbReference type="NCBI Taxonomy" id="443144"/>
    <lineage>
        <taxon>Bacteria</taxon>
        <taxon>Pseudomonadati</taxon>
        <taxon>Thermodesulfobacteriota</taxon>
        <taxon>Desulfuromonadia</taxon>
        <taxon>Geobacterales</taxon>
        <taxon>Geobacteraceae</taxon>
        <taxon>Geobacter</taxon>
    </lineage>
</organism>
<gene>
    <name evidence="1" type="primary">tmk</name>
    <name type="ordered locus">GM21_1059</name>
</gene>